<organism>
    <name type="scientific">Lycosa singoriensis</name>
    <name type="common">Wolf spider</name>
    <name type="synonym">Aranea singoriensis</name>
    <dbReference type="NCBI Taxonomy" id="434756"/>
    <lineage>
        <taxon>Eukaryota</taxon>
        <taxon>Metazoa</taxon>
        <taxon>Ecdysozoa</taxon>
        <taxon>Arthropoda</taxon>
        <taxon>Chelicerata</taxon>
        <taxon>Arachnida</taxon>
        <taxon>Araneae</taxon>
        <taxon>Araneomorphae</taxon>
        <taxon>Entelegynae</taxon>
        <taxon>Lycosoidea</taxon>
        <taxon>Lycosidae</taxon>
        <taxon>Lycosa</taxon>
    </lineage>
</organism>
<accession>B6DCM8</accession>
<proteinExistence type="evidence at transcript level"/>
<comment type="subcellular location">
    <subcellularLocation>
        <location evidence="1">Secreted</location>
    </subcellularLocation>
</comment>
<comment type="tissue specificity">
    <text>Expressed by the venom gland.</text>
</comment>
<comment type="domain">
    <text evidence="1">The presence of a 'disulfide through disulfide knot' structurally defines this protein as a knottin.</text>
</comment>
<comment type="similarity">
    <text evidence="3">Belongs to the neurotoxin 19 (CSTX) family. 04 (U1-Lctx) subfamily.</text>
</comment>
<reference key="1">
    <citation type="journal article" date="2010" name="Zoology">
        <title>Transcriptome analysis of the venom glands of the Chinese wolf spider Lycosa singoriensis.</title>
        <authorList>
            <person name="Zhang Y."/>
            <person name="Chen J."/>
            <person name="Tang X."/>
            <person name="Wang F."/>
            <person name="Jiang L."/>
            <person name="Xiong X."/>
            <person name="Wang M."/>
            <person name="Rong M."/>
            <person name="Liu Z."/>
            <person name="Liang S."/>
        </authorList>
    </citation>
    <scope>NUCLEOTIDE SEQUENCE [LARGE SCALE MRNA]</scope>
    <source>
        <tissue>Venom gland</tissue>
    </source>
</reference>
<name>TX139_LYCSI</name>
<sequence>MLKVLVVVALLVTLISYSSSEGIDDLEADELLSLMANEQTRKECIPKHHECTSNKHGCCRGNFFKYKCQCTTVVTQDGGQTERCFCGTPPHHKAAELVVGFGKKIFG</sequence>
<feature type="signal peptide" evidence="2">
    <location>
        <begin position="1"/>
        <end position="20"/>
    </location>
</feature>
<feature type="propeptide" id="PRO_0000401573" evidence="1">
    <location>
        <begin position="21"/>
        <end position="41"/>
    </location>
</feature>
<feature type="chain" id="PRO_0000401574" description="U1-lycotoxin-Ls1w">
    <location>
        <begin position="42"/>
        <end position="107"/>
    </location>
</feature>
<feature type="disulfide bond" evidence="1">
    <location>
        <begin position="44"/>
        <end position="59"/>
    </location>
</feature>
<feature type="disulfide bond" evidence="1">
    <location>
        <begin position="51"/>
        <end position="68"/>
    </location>
</feature>
<feature type="disulfide bond" evidence="1">
    <location>
        <begin position="58"/>
        <end position="86"/>
    </location>
</feature>
<feature type="disulfide bond" evidence="1">
    <location>
        <begin position="70"/>
        <end position="84"/>
    </location>
</feature>
<keyword id="KW-1015">Disulfide bond</keyword>
<keyword id="KW-0960">Knottin</keyword>
<keyword id="KW-0964">Secreted</keyword>
<keyword id="KW-0732">Signal</keyword>
<keyword id="KW-0800">Toxin</keyword>
<dbReference type="EMBL" id="EU925962">
    <property type="protein sequence ID" value="ACI41294.1"/>
    <property type="molecule type" value="mRNA"/>
</dbReference>
<dbReference type="EMBL" id="FM863966">
    <property type="protein sequence ID" value="CAS03564.1"/>
    <property type="molecule type" value="mRNA"/>
</dbReference>
<dbReference type="SMR" id="B6DCM8"/>
<dbReference type="ArachnoServer" id="AS000911">
    <property type="toxin name" value="U1-lycotoxin-Ls1w"/>
</dbReference>
<dbReference type="GO" id="GO:0005576">
    <property type="term" value="C:extracellular region"/>
    <property type="evidence" value="ECO:0007669"/>
    <property type="project" value="UniProtKB-SubCell"/>
</dbReference>
<dbReference type="GO" id="GO:0090729">
    <property type="term" value="F:toxin activity"/>
    <property type="evidence" value="ECO:0007669"/>
    <property type="project" value="UniProtKB-KW"/>
</dbReference>
<dbReference type="InterPro" id="IPR019553">
    <property type="entry name" value="Spider_toxin_CSTX_knottin"/>
</dbReference>
<dbReference type="InterPro" id="IPR011142">
    <property type="entry name" value="Spider_toxin_CSTX_Knottin_CS"/>
</dbReference>
<dbReference type="Pfam" id="PF10530">
    <property type="entry name" value="Toxin_35"/>
    <property type="match status" value="1"/>
</dbReference>
<dbReference type="PROSITE" id="PS60029">
    <property type="entry name" value="SPIDER_CSTX"/>
    <property type="match status" value="1"/>
</dbReference>
<evidence type="ECO:0000250" key="1"/>
<evidence type="ECO:0000255" key="2"/>
<evidence type="ECO:0000305" key="3"/>
<protein>
    <recommendedName>
        <fullName>U1-lycotoxin-Ls1w</fullName>
    </recommendedName>
    <alternativeName>
        <fullName>Toxin-like structure LSTX-A39</fullName>
    </alternativeName>
</protein>